<protein>
    <recommendedName>
        <fullName evidence="1">Zinc transport protein ZntB</fullName>
    </recommendedName>
</protein>
<organism>
    <name type="scientific">Photorhabdus laumondii subsp. laumondii (strain DSM 15139 / CIP 105565 / TT01)</name>
    <name type="common">Photorhabdus luminescens subsp. laumondii</name>
    <dbReference type="NCBI Taxonomy" id="243265"/>
    <lineage>
        <taxon>Bacteria</taxon>
        <taxon>Pseudomonadati</taxon>
        <taxon>Pseudomonadota</taxon>
        <taxon>Gammaproteobacteria</taxon>
        <taxon>Enterobacterales</taxon>
        <taxon>Morganellaceae</taxon>
        <taxon>Photorhabdus</taxon>
    </lineage>
</organism>
<name>ZNTB_PHOLL</name>
<keyword id="KW-0997">Cell inner membrane</keyword>
<keyword id="KW-1003">Cell membrane</keyword>
<keyword id="KW-0406">Ion transport</keyword>
<keyword id="KW-0472">Membrane</keyword>
<keyword id="KW-1185">Reference proteome</keyword>
<keyword id="KW-0812">Transmembrane</keyword>
<keyword id="KW-1133">Transmembrane helix</keyword>
<keyword id="KW-0813">Transport</keyword>
<keyword id="KW-0862">Zinc</keyword>
<accession>Q7N3Y5</accession>
<evidence type="ECO:0000255" key="1">
    <source>
        <dbReference type="HAMAP-Rule" id="MF_01565"/>
    </source>
</evidence>
<proteinExistence type="inferred from homology"/>
<reference key="1">
    <citation type="journal article" date="2003" name="Nat. Biotechnol.">
        <title>The genome sequence of the entomopathogenic bacterium Photorhabdus luminescens.</title>
        <authorList>
            <person name="Duchaud E."/>
            <person name="Rusniok C."/>
            <person name="Frangeul L."/>
            <person name="Buchrieser C."/>
            <person name="Givaudan A."/>
            <person name="Taourit S."/>
            <person name="Bocs S."/>
            <person name="Boursaux-Eude C."/>
            <person name="Chandler M."/>
            <person name="Charles J.-F."/>
            <person name="Dassa E."/>
            <person name="Derose R."/>
            <person name="Derzelle S."/>
            <person name="Freyssinet G."/>
            <person name="Gaudriault S."/>
            <person name="Medigue C."/>
            <person name="Lanois A."/>
            <person name="Powell K."/>
            <person name="Siguier P."/>
            <person name="Vincent R."/>
            <person name="Wingate V."/>
            <person name="Zouine M."/>
            <person name="Glaser P."/>
            <person name="Boemare N."/>
            <person name="Danchin A."/>
            <person name="Kunst F."/>
        </authorList>
    </citation>
    <scope>NUCLEOTIDE SEQUENCE [LARGE SCALE GENOMIC DNA]</scope>
    <source>
        <strain>DSM 15139 / CIP 105565 / TT01</strain>
    </source>
</reference>
<sequence>METIYGSSLKEADAVYACQFDGQGGMTPIDMNGVATPVQPFWQHLDYRNPKSYRWLMDTDLLPETVKAGLAGESLRPKIMRTGDGTMITFRTINNSESERPDQLVVFRIYINSQIVISSRHRKVHSLEQVLSDLQNGIGAKTTGHWLVEMVDAITDEVGNFIEDLHDNLIELENMILEQRIPGRGGLALLRKQLIILRRYMAPQRDVFARLASEKLLWMSDEDRYRMQEISDRLGRELDDLDGCIARTAIISDEITSMMADAMNRRTYTMSLLAMIFLPTTFLTGLFGVNLGGIPGNEYYLGFAIFCLLLFGLVLFVAWWLKKSKWL</sequence>
<comment type="function">
    <text evidence="1">Zinc transporter. Acts as a Zn(2+):proton symporter, which likely mediates zinc ion uptake.</text>
</comment>
<comment type="catalytic activity">
    <reaction evidence="1">
        <text>Zn(2+)(out) + H(+)(out) = Zn(2+)(in) + H(+)(in)</text>
        <dbReference type="Rhea" id="RHEA:71195"/>
        <dbReference type="ChEBI" id="CHEBI:15378"/>
        <dbReference type="ChEBI" id="CHEBI:29105"/>
    </reaction>
    <physiologicalReaction direction="left-to-right" evidence="1">
        <dbReference type="Rhea" id="RHEA:71196"/>
    </physiologicalReaction>
</comment>
<comment type="subcellular location">
    <subcellularLocation>
        <location evidence="1">Cell inner membrane</location>
        <topology evidence="1">Multi-pass membrane protein</topology>
    </subcellularLocation>
</comment>
<comment type="similarity">
    <text evidence="1">Belongs to the CorA metal ion transporter (MIT) (TC 1.A.35) family.</text>
</comment>
<dbReference type="EMBL" id="BX571867">
    <property type="protein sequence ID" value="CAE14951.1"/>
    <property type="molecule type" value="Genomic_DNA"/>
</dbReference>
<dbReference type="RefSeq" id="WP_011146799.1">
    <property type="nucleotide sequence ID" value="NC_005126.1"/>
</dbReference>
<dbReference type="SMR" id="Q7N3Y5"/>
<dbReference type="STRING" id="243265.plu2577"/>
<dbReference type="GeneID" id="48848836"/>
<dbReference type="KEGG" id="plu:plu2577"/>
<dbReference type="eggNOG" id="COG0598">
    <property type="taxonomic scope" value="Bacteria"/>
</dbReference>
<dbReference type="HOGENOM" id="CLU_007127_2_0_6"/>
<dbReference type="OrthoDB" id="9803484at2"/>
<dbReference type="Proteomes" id="UP000002514">
    <property type="component" value="Chromosome"/>
</dbReference>
<dbReference type="GO" id="GO:0005886">
    <property type="term" value="C:plasma membrane"/>
    <property type="evidence" value="ECO:0007669"/>
    <property type="project" value="UniProtKB-SubCell"/>
</dbReference>
<dbReference type="GO" id="GO:0050897">
    <property type="term" value="F:cobalt ion binding"/>
    <property type="evidence" value="ECO:0007669"/>
    <property type="project" value="TreeGrafter"/>
</dbReference>
<dbReference type="GO" id="GO:0015087">
    <property type="term" value="F:cobalt ion transmembrane transporter activity"/>
    <property type="evidence" value="ECO:0007669"/>
    <property type="project" value="TreeGrafter"/>
</dbReference>
<dbReference type="GO" id="GO:0000287">
    <property type="term" value="F:magnesium ion binding"/>
    <property type="evidence" value="ECO:0007669"/>
    <property type="project" value="TreeGrafter"/>
</dbReference>
<dbReference type="GO" id="GO:0015095">
    <property type="term" value="F:magnesium ion transmembrane transporter activity"/>
    <property type="evidence" value="ECO:0007669"/>
    <property type="project" value="TreeGrafter"/>
</dbReference>
<dbReference type="GO" id="GO:0005385">
    <property type="term" value="F:zinc ion transmembrane transporter activity"/>
    <property type="evidence" value="ECO:0007669"/>
    <property type="project" value="UniProtKB-UniRule"/>
</dbReference>
<dbReference type="CDD" id="cd12833">
    <property type="entry name" value="ZntB-like_1"/>
    <property type="match status" value="1"/>
</dbReference>
<dbReference type="Gene3D" id="3.30.460.20">
    <property type="entry name" value="CorA soluble domain-like"/>
    <property type="match status" value="1"/>
</dbReference>
<dbReference type="Gene3D" id="1.20.58.340">
    <property type="entry name" value="Magnesium transport protein CorA, transmembrane region"/>
    <property type="match status" value="2"/>
</dbReference>
<dbReference type="HAMAP" id="MF_01565">
    <property type="entry name" value="ZntB"/>
    <property type="match status" value="1"/>
</dbReference>
<dbReference type="InterPro" id="IPR045861">
    <property type="entry name" value="CorA_cytoplasmic_dom"/>
</dbReference>
<dbReference type="InterPro" id="IPR045863">
    <property type="entry name" value="CorA_TM1_TM2"/>
</dbReference>
<dbReference type="InterPro" id="IPR002523">
    <property type="entry name" value="MgTranspt_CorA/ZnTranspt_ZntB"/>
</dbReference>
<dbReference type="InterPro" id="IPR023714">
    <property type="entry name" value="Zn_transp_ZntB"/>
</dbReference>
<dbReference type="NCBIfam" id="NF007092">
    <property type="entry name" value="PRK09546.1"/>
    <property type="match status" value="1"/>
</dbReference>
<dbReference type="PANTHER" id="PTHR46494">
    <property type="entry name" value="CORA FAMILY METAL ION TRANSPORTER (EUROFUNG)"/>
    <property type="match status" value="1"/>
</dbReference>
<dbReference type="PANTHER" id="PTHR46494:SF3">
    <property type="entry name" value="ZINC TRANSPORT PROTEIN ZNTB"/>
    <property type="match status" value="1"/>
</dbReference>
<dbReference type="Pfam" id="PF01544">
    <property type="entry name" value="CorA"/>
    <property type="match status" value="1"/>
</dbReference>
<dbReference type="SUPFAM" id="SSF143865">
    <property type="entry name" value="CorA soluble domain-like"/>
    <property type="match status" value="1"/>
</dbReference>
<dbReference type="SUPFAM" id="SSF144083">
    <property type="entry name" value="Magnesium transport protein CorA, transmembrane region"/>
    <property type="match status" value="1"/>
</dbReference>
<gene>
    <name evidence="1" type="primary">zntB</name>
    <name type="ordered locus">plu2577</name>
</gene>
<feature type="chain" id="PRO_0000239243" description="Zinc transport protein ZntB">
    <location>
        <begin position="1"/>
        <end position="327"/>
    </location>
</feature>
<feature type="topological domain" description="Cytoplasmic" evidence="1">
    <location>
        <begin position="1"/>
        <end position="271"/>
    </location>
</feature>
<feature type="transmembrane region" description="Helical" evidence="1">
    <location>
        <begin position="272"/>
        <end position="292"/>
    </location>
</feature>
<feature type="topological domain" description="Periplasmic" evidence="1">
    <location>
        <begin position="293"/>
        <end position="300"/>
    </location>
</feature>
<feature type="transmembrane region" description="Helical" evidence="1">
    <location>
        <begin position="301"/>
        <end position="321"/>
    </location>
</feature>
<feature type="topological domain" description="Cytoplasmic" evidence="1">
    <location>
        <begin position="322"/>
        <end position="327"/>
    </location>
</feature>